<proteinExistence type="inferred from homology"/>
<keyword id="KW-0963">Cytoplasm</keyword>
<keyword id="KW-0396">Initiation factor</keyword>
<keyword id="KW-0648">Protein biosynthesis</keyword>
<keyword id="KW-1185">Reference proteome</keyword>
<reference key="1">
    <citation type="journal article" date="2005" name="Nature">
        <title>Genome sequencing and analysis of Aspergillus oryzae.</title>
        <authorList>
            <person name="Machida M."/>
            <person name="Asai K."/>
            <person name="Sano M."/>
            <person name="Tanaka T."/>
            <person name="Kumagai T."/>
            <person name="Terai G."/>
            <person name="Kusumoto K."/>
            <person name="Arima T."/>
            <person name="Akita O."/>
            <person name="Kashiwagi Y."/>
            <person name="Abe K."/>
            <person name="Gomi K."/>
            <person name="Horiuchi H."/>
            <person name="Kitamoto K."/>
            <person name="Kobayashi T."/>
            <person name="Takeuchi M."/>
            <person name="Denning D.W."/>
            <person name="Galagan J.E."/>
            <person name="Nierman W.C."/>
            <person name="Yu J."/>
            <person name="Archer D.B."/>
            <person name="Bennett J.W."/>
            <person name="Bhatnagar D."/>
            <person name="Cleveland T.E."/>
            <person name="Fedorova N.D."/>
            <person name="Gotoh O."/>
            <person name="Horikawa H."/>
            <person name="Hosoyama A."/>
            <person name="Ichinomiya M."/>
            <person name="Igarashi R."/>
            <person name="Iwashita K."/>
            <person name="Juvvadi P.R."/>
            <person name="Kato M."/>
            <person name="Kato Y."/>
            <person name="Kin T."/>
            <person name="Kokubun A."/>
            <person name="Maeda H."/>
            <person name="Maeyama N."/>
            <person name="Maruyama J."/>
            <person name="Nagasaki H."/>
            <person name="Nakajima T."/>
            <person name="Oda K."/>
            <person name="Okada K."/>
            <person name="Paulsen I."/>
            <person name="Sakamoto K."/>
            <person name="Sawano T."/>
            <person name="Takahashi M."/>
            <person name="Takase K."/>
            <person name="Terabayashi Y."/>
            <person name="Wortman J.R."/>
            <person name="Yamada O."/>
            <person name="Yamagata Y."/>
            <person name="Anazawa H."/>
            <person name="Hata Y."/>
            <person name="Koide Y."/>
            <person name="Komori T."/>
            <person name="Koyama Y."/>
            <person name="Minetoki T."/>
            <person name="Suharnan S."/>
            <person name="Tanaka A."/>
            <person name="Isono K."/>
            <person name="Kuhara S."/>
            <person name="Ogasawara N."/>
            <person name="Kikuchi H."/>
        </authorList>
    </citation>
    <scope>NUCLEOTIDE SEQUENCE [LARGE SCALE GENOMIC DNA]</scope>
    <source>
        <strain>ATCC 42149 / RIB 40</strain>
    </source>
</reference>
<comment type="function">
    <text evidence="1">Component of the eukaryotic translation initiation factor 3 (eIF-3) complex, which is involved in protein synthesis of a specialized repertoire of mRNAs and, together with other initiation factors, stimulates binding of mRNA and methionyl-tRNAi to the 40S ribosome. The eIF-3 complex specifically targets and initiates translation of a subset of mRNAs involved in cell proliferation.</text>
</comment>
<comment type="subunit">
    <text evidence="1">Component of the eukaryotic translation initiation factor 3 (eIF-3) complex.</text>
</comment>
<comment type="subcellular location">
    <subcellularLocation>
        <location evidence="1">Cytoplasm</location>
    </subcellularLocation>
</comment>
<comment type="similarity">
    <text evidence="1">Belongs to the eIF-3 subunit L family.</text>
</comment>
<gene>
    <name type="ORF">AO090011000599</name>
</gene>
<organism>
    <name type="scientific">Aspergillus oryzae (strain ATCC 42149 / RIB 40)</name>
    <name type="common">Yellow koji mold</name>
    <dbReference type="NCBI Taxonomy" id="510516"/>
    <lineage>
        <taxon>Eukaryota</taxon>
        <taxon>Fungi</taxon>
        <taxon>Dikarya</taxon>
        <taxon>Ascomycota</taxon>
        <taxon>Pezizomycotina</taxon>
        <taxon>Eurotiomycetes</taxon>
        <taxon>Eurotiomycetidae</taxon>
        <taxon>Eurotiales</taxon>
        <taxon>Aspergillaceae</taxon>
        <taxon>Aspergillus</taxon>
        <taxon>Aspergillus subgen. Circumdati</taxon>
    </lineage>
</organism>
<protein>
    <recommendedName>
        <fullName evidence="1">Eukaryotic translation initiation factor 3 subunit L</fullName>
        <shortName evidence="1">eIF3l</shortName>
    </recommendedName>
</protein>
<dbReference type="EMBL" id="BA000055">
    <property type="protein sequence ID" value="BAE65074.1"/>
    <property type="molecule type" value="Genomic_DNA"/>
</dbReference>
<dbReference type="RefSeq" id="XP_001826207.1">
    <property type="nucleotide sequence ID" value="XM_001826155.3"/>
</dbReference>
<dbReference type="SMR" id="Q2U041"/>
<dbReference type="STRING" id="510516.Q2U041"/>
<dbReference type="EnsemblFungi" id="BAE65074">
    <property type="protein sequence ID" value="BAE65074"/>
    <property type="gene ID" value="AO090011000599"/>
</dbReference>
<dbReference type="GeneID" id="5998310"/>
<dbReference type="KEGG" id="aor:AO090011000599"/>
<dbReference type="VEuPathDB" id="FungiDB:AO090011000599"/>
<dbReference type="HOGENOM" id="CLU_029210_2_0_1"/>
<dbReference type="OMA" id="AGWFIRN"/>
<dbReference type="OrthoDB" id="20425at5052"/>
<dbReference type="Proteomes" id="UP000006564">
    <property type="component" value="Chromosome 7"/>
</dbReference>
<dbReference type="GO" id="GO:0016282">
    <property type="term" value="C:eukaryotic 43S preinitiation complex"/>
    <property type="evidence" value="ECO:0007669"/>
    <property type="project" value="UniProtKB-UniRule"/>
</dbReference>
<dbReference type="GO" id="GO:0033290">
    <property type="term" value="C:eukaryotic 48S preinitiation complex"/>
    <property type="evidence" value="ECO:0007669"/>
    <property type="project" value="UniProtKB-UniRule"/>
</dbReference>
<dbReference type="GO" id="GO:0005852">
    <property type="term" value="C:eukaryotic translation initiation factor 3 complex"/>
    <property type="evidence" value="ECO:0007669"/>
    <property type="project" value="UniProtKB-UniRule"/>
</dbReference>
<dbReference type="GO" id="GO:0003743">
    <property type="term" value="F:translation initiation factor activity"/>
    <property type="evidence" value="ECO:0007669"/>
    <property type="project" value="UniProtKB-UniRule"/>
</dbReference>
<dbReference type="GO" id="GO:0001732">
    <property type="term" value="P:formation of cytoplasmic translation initiation complex"/>
    <property type="evidence" value="ECO:0007669"/>
    <property type="project" value="UniProtKB-UniRule"/>
</dbReference>
<dbReference type="HAMAP" id="MF_03011">
    <property type="entry name" value="eIF3l"/>
    <property type="match status" value="1"/>
</dbReference>
<dbReference type="InterPro" id="IPR019382">
    <property type="entry name" value="eIF3l"/>
</dbReference>
<dbReference type="InterPro" id="IPR000717">
    <property type="entry name" value="PCI_dom"/>
</dbReference>
<dbReference type="PANTHER" id="PTHR13242">
    <property type="entry name" value="EUKARYOTIC TRANSLATION INITIATION FACTOR 3"/>
    <property type="match status" value="1"/>
</dbReference>
<dbReference type="PANTHER" id="PTHR13242:SF0">
    <property type="entry name" value="EUKARYOTIC TRANSLATION INITIATION FACTOR 3 SUBUNIT L"/>
    <property type="match status" value="1"/>
</dbReference>
<dbReference type="Pfam" id="PF10255">
    <property type="entry name" value="Paf67"/>
    <property type="match status" value="1"/>
</dbReference>
<dbReference type="PROSITE" id="PS50250">
    <property type="entry name" value="PCI"/>
    <property type="match status" value="1"/>
</dbReference>
<evidence type="ECO:0000255" key="1">
    <source>
        <dbReference type="HAMAP-Rule" id="MF_03011"/>
    </source>
</evidence>
<evidence type="ECO:0000255" key="2">
    <source>
        <dbReference type="PROSITE-ProRule" id="PRU01185"/>
    </source>
</evidence>
<sequence>MSYEERANAHPNLGDESDVEEEALVNDYREQVNFDDSMSELDRTTSLGAGSQTQDLQAQLAAAATPLEYQATLETKFASYDNYCSLFHYILNSDGPVELEVPSYYWAWDVIDEFIYQFESFCRYRNRVARSGSNEEEAQLLRENPNTWGCYSVLNVLYSLIQRSQINEQLAAIKRGEDPMAFAGEYGSRPLYKMLGYFSIIGLLRVHCLLGDFSLALKTLDDIEMNKKAMFARVMAAHFTTYYYVGFSYMMMRRYGDAIRMFSHILVYVSRTKNFQKGGNSYDAIAKKNDQMYALIAICVALHPTRLDDTIHSALREKYGEQLHRLQHGGPEALPLFEELFRSACPKFISPTPPDFDNPSVNVDPVDHHTAIFMDEVKNTLYNPTIRSYLKLYTTMDLQKLAGFLEVEPEKLRSWLLVNKQRSRQVRWVEGGLLEGEPVAANDLDYALENDLIHVSETKAGRRLVDWYLRNLARVY</sequence>
<name>EIF3L_ASPOR</name>
<feature type="chain" id="PRO_0000364259" description="Eukaryotic translation initiation factor 3 subunit L">
    <location>
        <begin position="1"/>
        <end position="476"/>
    </location>
</feature>
<feature type="domain" description="PCI" evidence="2">
    <location>
        <begin position="257"/>
        <end position="452"/>
    </location>
</feature>
<accession>Q2U041</accession>